<gene>
    <name type="primary">sodA</name>
    <name type="synonym">sodM</name>
    <name type="ordered locus">SpyM3_1071</name>
</gene>
<protein>
    <recommendedName>
        <fullName>Superoxide dismutase [Mn]</fullName>
        <ecNumber>1.15.1.1</ecNumber>
    </recommendedName>
</protein>
<comment type="function">
    <text>Destroys superoxide anion radicals which are normally produced within the cells and which are toxic to biological systems.</text>
</comment>
<comment type="catalytic activity">
    <reaction>
        <text>2 superoxide + 2 H(+) = H2O2 + O2</text>
        <dbReference type="Rhea" id="RHEA:20696"/>
        <dbReference type="ChEBI" id="CHEBI:15378"/>
        <dbReference type="ChEBI" id="CHEBI:15379"/>
        <dbReference type="ChEBI" id="CHEBI:16240"/>
        <dbReference type="ChEBI" id="CHEBI:18421"/>
        <dbReference type="EC" id="1.15.1.1"/>
    </reaction>
</comment>
<comment type="cofactor">
    <cofactor evidence="1">
        <name>Mn(2+)</name>
        <dbReference type="ChEBI" id="CHEBI:29035"/>
    </cofactor>
    <text evidence="1">Binds 1 Mn(2+) ion per subunit.</text>
</comment>
<comment type="subunit">
    <text evidence="1">Homodimer.</text>
</comment>
<comment type="subcellular location">
    <subcellularLocation>
        <location evidence="1">Secreted</location>
    </subcellularLocation>
</comment>
<comment type="similarity">
    <text evidence="2">Belongs to the iron/manganese superoxide dismutase family.</text>
</comment>
<comment type="caution">
    <text evidence="2">Although found extracellularly, no signal sequence is present. An alternative secretory pathway may be used.</text>
</comment>
<feature type="initiator methionine" description="Removed" evidence="1">
    <location>
        <position position="1"/>
    </location>
</feature>
<feature type="chain" id="PRO_0000160102" description="Superoxide dismutase [Mn]">
    <location>
        <begin position="2"/>
        <end position="201"/>
    </location>
</feature>
<feature type="binding site" evidence="1">
    <location>
        <position position="27"/>
    </location>
    <ligand>
        <name>Mn(2+)</name>
        <dbReference type="ChEBI" id="CHEBI:29035"/>
    </ligand>
</feature>
<feature type="binding site" evidence="1">
    <location>
        <position position="81"/>
    </location>
    <ligand>
        <name>Mn(2+)</name>
        <dbReference type="ChEBI" id="CHEBI:29035"/>
    </ligand>
</feature>
<feature type="binding site" evidence="1">
    <location>
        <position position="163"/>
    </location>
    <ligand>
        <name>Mn(2+)</name>
        <dbReference type="ChEBI" id="CHEBI:29035"/>
    </ligand>
</feature>
<feature type="binding site" evidence="1">
    <location>
        <position position="167"/>
    </location>
    <ligand>
        <name>Mn(2+)</name>
        <dbReference type="ChEBI" id="CHEBI:29035"/>
    </ligand>
</feature>
<proteinExistence type="inferred from homology"/>
<sequence length="201" mass="22657">MAIILPELPYAYDALEPQFDAETMTLHHDKHHATYVANTNAALEKHPEIGENLEELLADVTKIPEDIRQALINNGGGHLNHALFWELLSPEKQDVTSDVAQAIDDAFGSFDAFKEQFTAAATGRFGSGWAWLVVNKEGQLEITSTANQDTPISEGKKPILALDVWEHAYYLNYRNVRPNYIKAFFEIINWKKVSELYQAAK</sequence>
<dbReference type="EC" id="1.15.1.1"/>
<dbReference type="EMBL" id="AE014074">
    <property type="protein sequence ID" value="AAM79678.1"/>
    <property type="molecule type" value="Genomic_DNA"/>
</dbReference>
<dbReference type="RefSeq" id="WP_011054658.1">
    <property type="nucleotide sequence ID" value="NC_004070.1"/>
</dbReference>
<dbReference type="SMR" id="P0DF72"/>
<dbReference type="KEGG" id="spg:SpyM3_1071"/>
<dbReference type="HOGENOM" id="CLU_031625_0_1_9"/>
<dbReference type="Proteomes" id="UP000000564">
    <property type="component" value="Chromosome"/>
</dbReference>
<dbReference type="GO" id="GO:0005737">
    <property type="term" value="C:cytoplasm"/>
    <property type="evidence" value="ECO:0007669"/>
    <property type="project" value="TreeGrafter"/>
</dbReference>
<dbReference type="GO" id="GO:0005576">
    <property type="term" value="C:extracellular region"/>
    <property type="evidence" value="ECO:0007669"/>
    <property type="project" value="UniProtKB-SubCell"/>
</dbReference>
<dbReference type="GO" id="GO:0046872">
    <property type="term" value="F:metal ion binding"/>
    <property type="evidence" value="ECO:0007669"/>
    <property type="project" value="UniProtKB-KW"/>
</dbReference>
<dbReference type="GO" id="GO:0004784">
    <property type="term" value="F:superoxide dismutase activity"/>
    <property type="evidence" value="ECO:0007669"/>
    <property type="project" value="UniProtKB-EC"/>
</dbReference>
<dbReference type="FunFam" id="1.10.287.990:FF:000001">
    <property type="entry name" value="Superoxide dismutase"/>
    <property type="match status" value="1"/>
</dbReference>
<dbReference type="FunFam" id="3.55.40.20:FF:000001">
    <property type="entry name" value="Superoxide dismutase"/>
    <property type="match status" value="1"/>
</dbReference>
<dbReference type="Gene3D" id="1.10.287.990">
    <property type="entry name" value="Fe,Mn superoxide dismutase (SOD) domain"/>
    <property type="match status" value="1"/>
</dbReference>
<dbReference type="Gene3D" id="3.55.40.20">
    <property type="entry name" value="Iron/manganese superoxide dismutase, C-terminal domain"/>
    <property type="match status" value="1"/>
</dbReference>
<dbReference type="InterPro" id="IPR001189">
    <property type="entry name" value="Mn/Fe_SOD"/>
</dbReference>
<dbReference type="InterPro" id="IPR019833">
    <property type="entry name" value="Mn/Fe_SOD_BS"/>
</dbReference>
<dbReference type="InterPro" id="IPR019832">
    <property type="entry name" value="Mn/Fe_SOD_C"/>
</dbReference>
<dbReference type="InterPro" id="IPR019831">
    <property type="entry name" value="Mn/Fe_SOD_N"/>
</dbReference>
<dbReference type="InterPro" id="IPR036324">
    <property type="entry name" value="Mn/Fe_SOD_N_sf"/>
</dbReference>
<dbReference type="InterPro" id="IPR036314">
    <property type="entry name" value="SOD_C_sf"/>
</dbReference>
<dbReference type="PANTHER" id="PTHR43595">
    <property type="entry name" value="37S RIBOSOMAL PROTEIN S26, MITOCHONDRIAL"/>
    <property type="match status" value="1"/>
</dbReference>
<dbReference type="PANTHER" id="PTHR43595:SF2">
    <property type="entry name" value="SMALL RIBOSOMAL SUBUNIT PROTEIN MS42"/>
    <property type="match status" value="1"/>
</dbReference>
<dbReference type="Pfam" id="PF02777">
    <property type="entry name" value="Sod_Fe_C"/>
    <property type="match status" value="1"/>
</dbReference>
<dbReference type="Pfam" id="PF00081">
    <property type="entry name" value="Sod_Fe_N"/>
    <property type="match status" value="1"/>
</dbReference>
<dbReference type="PIRSF" id="PIRSF000349">
    <property type="entry name" value="SODismutase"/>
    <property type="match status" value="1"/>
</dbReference>
<dbReference type="PRINTS" id="PR01703">
    <property type="entry name" value="MNSODISMTASE"/>
</dbReference>
<dbReference type="SUPFAM" id="SSF54719">
    <property type="entry name" value="Fe,Mn superoxide dismutase (SOD), C-terminal domain"/>
    <property type="match status" value="1"/>
</dbReference>
<dbReference type="SUPFAM" id="SSF46609">
    <property type="entry name" value="Fe,Mn superoxide dismutase (SOD), N-terminal domain"/>
    <property type="match status" value="1"/>
</dbReference>
<dbReference type="PROSITE" id="PS00088">
    <property type="entry name" value="SOD_MN"/>
    <property type="match status" value="1"/>
</dbReference>
<evidence type="ECO:0000250" key="1"/>
<evidence type="ECO:0000305" key="2"/>
<organism>
    <name type="scientific">Streptococcus pyogenes serotype M3 (strain ATCC BAA-595 / MGAS315)</name>
    <dbReference type="NCBI Taxonomy" id="198466"/>
    <lineage>
        <taxon>Bacteria</taxon>
        <taxon>Bacillati</taxon>
        <taxon>Bacillota</taxon>
        <taxon>Bacilli</taxon>
        <taxon>Lactobacillales</taxon>
        <taxon>Streptococcaceae</taxon>
        <taxon>Streptococcus</taxon>
    </lineage>
</organism>
<accession>P0DF72</accession>
<accession>Q8K6Y8</accession>
<reference key="1">
    <citation type="journal article" date="2002" name="Proc. Natl. Acad. Sci. U.S.A.">
        <title>Genome sequence of a serotype M3 strain of group A Streptococcus: phage-encoded toxins, the high-virulence phenotype, and clone emergence.</title>
        <authorList>
            <person name="Beres S.B."/>
            <person name="Sylva G.L."/>
            <person name="Barbian K.D."/>
            <person name="Lei B."/>
            <person name="Hoff J.S."/>
            <person name="Mammarella N.D."/>
            <person name="Liu M.-Y."/>
            <person name="Smoot J.C."/>
            <person name="Porcella S.F."/>
            <person name="Parkins L.D."/>
            <person name="Campbell D.S."/>
            <person name="Smith T.M."/>
            <person name="McCormick J.K."/>
            <person name="Leung D.Y.M."/>
            <person name="Schlievert P.M."/>
            <person name="Musser J.M."/>
        </authorList>
    </citation>
    <scope>NUCLEOTIDE SEQUENCE [LARGE SCALE GENOMIC DNA]</scope>
    <source>
        <strain>ATCC BAA-595 / MGAS315</strain>
    </source>
</reference>
<name>SODM_STRP3</name>
<keyword id="KW-0464">Manganese</keyword>
<keyword id="KW-0479">Metal-binding</keyword>
<keyword id="KW-0560">Oxidoreductase</keyword>
<keyword id="KW-0964">Secreted</keyword>